<keyword id="KW-0010">Activator</keyword>
<keyword id="KW-0238">DNA-binding</keyword>
<keyword id="KW-1185">Reference proteome</keyword>
<keyword id="KW-0678">Repressor</keyword>
<keyword id="KW-0804">Transcription</keyword>
<keyword id="KW-0805">Transcription regulation</keyword>
<evidence type="ECO:0000255" key="1">
    <source>
        <dbReference type="PROSITE-ProRule" id="PRU00111"/>
    </source>
</evidence>
<evidence type="ECO:0000269" key="2">
    <source>
    </source>
</evidence>
<sequence length="329" mass="37687">MPTIDEIAKLCNVSKTTVSRVLNNHPYVSKEKRDMILKAINELDYTPNYLARNFRRNKTQTIALSVPSIDHPFFAQLIKGVSHEVLFKNYKVIVFQTFYDKQTELELLELLKHKEVDGIILGTLENEWDQISPFLKYGPILLCNEYHHSADITIIGYDEFEAAYMGVVHLIERGHKKIGFCFDTPYSEAQCQRKEGYLKALQDYNLHHRSEWIFGEMFNIEDGFRVFHKIKDLKDRPSAIFTGNDQVAAGIIKQAMKNGFKVPEDLAVIGFDNQLICQVVTPTITTIDIPVIELGQQAVLKIIESISGNASLNRRIIKLPTKLIIREST</sequence>
<organism>
    <name type="scientific">Bacillus subtilis (strain 168)</name>
    <dbReference type="NCBI Taxonomy" id="224308"/>
    <lineage>
        <taxon>Bacteria</taxon>
        <taxon>Bacillati</taxon>
        <taxon>Bacillota</taxon>
        <taxon>Bacilli</taxon>
        <taxon>Bacillales</taxon>
        <taxon>Bacillaceae</taxon>
        <taxon>Bacillus</taxon>
    </lineage>
</organism>
<protein>
    <recommendedName>
        <fullName>NTD biosynthesis operon regulator NtdR</fullName>
    </recommendedName>
</protein>
<proteinExistence type="predicted"/>
<gene>
    <name type="primary">ntdR</name>
    <name type="synonym">yhjM</name>
    <name type="ordered locus">BSU10560</name>
</gene>
<feature type="chain" id="PRO_0000107973" description="NTD biosynthesis operon regulator NtdR">
    <location>
        <begin position="1"/>
        <end position="329"/>
    </location>
</feature>
<feature type="domain" description="HTH lacI-type" evidence="1">
    <location>
        <begin position="2"/>
        <end position="56"/>
    </location>
</feature>
<feature type="DNA-binding region" description="H-T-H motif" evidence="1">
    <location>
        <begin position="4"/>
        <end position="23"/>
    </location>
</feature>
<dbReference type="EMBL" id="Y14081">
    <property type="protein sequence ID" value="CAA74475.1"/>
    <property type="molecule type" value="Genomic_DNA"/>
</dbReference>
<dbReference type="EMBL" id="AL009126">
    <property type="protein sequence ID" value="CAB12896.1"/>
    <property type="molecule type" value="Genomic_DNA"/>
</dbReference>
<dbReference type="PIR" id="D69834">
    <property type="entry name" value="D69834"/>
</dbReference>
<dbReference type="RefSeq" id="NP_388937.1">
    <property type="nucleotide sequence ID" value="NC_000964.3"/>
</dbReference>
<dbReference type="RefSeq" id="WP_009966948.1">
    <property type="nucleotide sequence ID" value="NZ_OZ025638.1"/>
</dbReference>
<dbReference type="SMR" id="O07567"/>
<dbReference type="FunCoup" id="O07567">
    <property type="interactions" value="33"/>
</dbReference>
<dbReference type="STRING" id="224308.BSU10560"/>
<dbReference type="PaxDb" id="224308-BSU10560"/>
<dbReference type="EnsemblBacteria" id="CAB12896">
    <property type="protein sequence ID" value="CAB12896"/>
    <property type="gene ID" value="BSU_10560"/>
</dbReference>
<dbReference type="GeneID" id="936344"/>
<dbReference type="KEGG" id="bsu:BSU10560"/>
<dbReference type="PATRIC" id="fig|224308.179.peg.1135"/>
<dbReference type="eggNOG" id="COG1609">
    <property type="taxonomic scope" value="Bacteria"/>
</dbReference>
<dbReference type="InParanoid" id="O07567"/>
<dbReference type="OrthoDB" id="9798934at2"/>
<dbReference type="PhylomeDB" id="O07567"/>
<dbReference type="BioCyc" id="BSUB:BSU10560-MONOMER"/>
<dbReference type="Proteomes" id="UP000001570">
    <property type="component" value="Chromosome"/>
</dbReference>
<dbReference type="GO" id="GO:0003700">
    <property type="term" value="F:DNA-binding transcription factor activity"/>
    <property type="evidence" value="ECO:0000318"/>
    <property type="project" value="GO_Central"/>
</dbReference>
<dbReference type="GO" id="GO:0000976">
    <property type="term" value="F:transcription cis-regulatory region binding"/>
    <property type="evidence" value="ECO:0000318"/>
    <property type="project" value="GO_Central"/>
</dbReference>
<dbReference type="GO" id="GO:0006355">
    <property type="term" value="P:regulation of DNA-templated transcription"/>
    <property type="evidence" value="ECO:0000318"/>
    <property type="project" value="GO_Central"/>
</dbReference>
<dbReference type="CDD" id="cd01392">
    <property type="entry name" value="HTH_LacI"/>
    <property type="match status" value="1"/>
</dbReference>
<dbReference type="CDD" id="cd06286">
    <property type="entry name" value="PBP1_CcpB-like"/>
    <property type="match status" value="1"/>
</dbReference>
<dbReference type="Gene3D" id="3.40.50.2300">
    <property type="match status" value="2"/>
</dbReference>
<dbReference type="Gene3D" id="1.10.260.40">
    <property type="entry name" value="lambda repressor-like DNA-binding domains"/>
    <property type="match status" value="1"/>
</dbReference>
<dbReference type="InterPro" id="IPR000843">
    <property type="entry name" value="HTH_LacI"/>
</dbReference>
<dbReference type="InterPro" id="IPR046335">
    <property type="entry name" value="LacI/GalR-like_sensor"/>
</dbReference>
<dbReference type="InterPro" id="IPR010982">
    <property type="entry name" value="Lambda_DNA-bd_dom_sf"/>
</dbReference>
<dbReference type="InterPro" id="IPR028082">
    <property type="entry name" value="Peripla_BP_I"/>
</dbReference>
<dbReference type="PANTHER" id="PTHR30146">
    <property type="entry name" value="LACI-RELATED TRANSCRIPTIONAL REPRESSOR"/>
    <property type="match status" value="1"/>
</dbReference>
<dbReference type="PANTHER" id="PTHR30146:SF136">
    <property type="entry name" value="NTD BIOSYNTHESIS OPERON REGULATOR NTDR"/>
    <property type="match status" value="1"/>
</dbReference>
<dbReference type="Pfam" id="PF00356">
    <property type="entry name" value="LacI"/>
    <property type="match status" value="1"/>
</dbReference>
<dbReference type="Pfam" id="PF13377">
    <property type="entry name" value="Peripla_BP_3"/>
    <property type="match status" value="1"/>
</dbReference>
<dbReference type="SMART" id="SM00354">
    <property type="entry name" value="HTH_LACI"/>
    <property type="match status" value="1"/>
</dbReference>
<dbReference type="SUPFAM" id="SSF47413">
    <property type="entry name" value="lambda repressor-like DNA-binding domains"/>
    <property type="match status" value="1"/>
</dbReference>
<dbReference type="SUPFAM" id="SSF53822">
    <property type="entry name" value="Periplasmic binding protein-like I"/>
    <property type="match status" value="1"/>
</dbReference>
<dbReference type="PROSITE" id="PS50932">
    <property type="entry name" value="HTH_LACI_2"/>
    <property type="match status" value="1"/>
</dbReference>
<name>NTDR_BACSU</name>
<accession>O07567</accession>
<accession>Q796R9</accession>
<comment type="function">
    <text evidence="2">Positively regulates the ntdABC operon and negatively regulates its own transcription. Binds to NTD to induce ntdABC transcription.</text>
</comment>
<reference key="1">
    <citation type="journal article" date="1998" name="Microbiology">
        <title>The 172 kb prkA-addAB region from 83 degrees to 97 degrees of the Bacillus subtilis chromosome contains several dysfunctional genes, the glyB marker, many genes encoding transporter proteins, and the ubiquitous hit gene.</title>
        <authorList>
            <person name="Noback M.A."/>
            <person name="Holsappel S."/>
            <person name="Kiewiet R."/>
            <person name="Terpstra P."/>
            <person name="Wambutt R."/>
            <person name="Wedler H."/>
            <person name="Venema G."/>
            <person name="Bron S."/>
        </authorList>
    </citation>
    <scope>NUCLEOTIDE SEQUENCE [GENOMIC DNA]</scope>
    <source>
        <strain>168</strain>
    </source>
</reference>
<reference key="2">
    <citation type="journal article" date="1997" name="Nature">
        <title>The complete genome sequence of the Gram-positive bacterium Bacillus subtilis.</title>
        <authorList>
            <person name="Kunst F."/>
            <person name="Ogasawara N."/>
            <person name="Moszer I."/>
            <person name="Albertini A.M."/>
            <person name="Alloni G."/>
            <person name="Azevedo V."/>
            <person name="Bertero M.G."/>
            <person name="Bessieres P."/>
            <person name="Bolotin A."/>
            <person name="Borchert S."/>
            <person name="Borriss R."/>
            <person name="Boursier L."/>
            <person name="Brans A."/>
            <person name="Braun M."/>
            <person name="Brignell S.C."/>
            <person name="Bron S."/>
            <person name="Brouillet S."/>
            <person name="Bruschi C.V."/>
            <person name="Caldwell B."/>
            <person name="Capuano V."/>
            <person name="Carter N.M."/>
            <person name="Choi S.-K."/>
            <person name="Codani J.-J."/>
            <person name="Connerton I.F."/>
            <person name="Cummings N.J."/>
            <person name="Daniel R.A."/>
            <person name="Denizot F."/>
            <person name="Devine K.M."/>
            <person name="Duesterhoeft A."/>
            <person name="Ehrlich S.D."/>
            <person name="Emmerson P.T."/>
            <person name="Entian K.-D."/>
            <person name="Errington J."/>
            <person name="Fabret C."/>
            <person name="Ferrari E."/>
            <person name="Foulger D."/>
            <person name="Fritz C."/>
            <person name="Fujita M."/>
            <person name="Fujita Y."/>
            <person name="Fuma S."/>
            <person name="Galizzi A."/>
            <person name="Galleron N."/>
            <person name="Ghim S.-Y."/>
            <person name="Glaser P."/>
            <person name="Goffeau A."/>
            <person name="Golightly E.J."/>
            <person name="Grandi G."/>
            <person name="Guiseppi G."/>
            <person name="Guy B.J."/>
            <person name="Haga K."/>
            <person name="Haiech J."/>
            <person name="Harwood C.R."/>
            <person name="Henaut A."/>
            <person name="Hilbert H."/>
            <person name="Holsappel S."/>
            <person name="Hosono S."/>
            <person name="Hullo M.-F."/>
            <person name="Itaya M."/>
            <person name="Jones L.-M."/>
            <person name="Joris B."/>
            <person name="Karamata D."/>
            <person name="Kasahara Y."/>
            <person name="Klaerr-Blanchard M."/>
            <person name="Klein C."/>
            <person name="Kobayashi Y."/>
            <person name="Koetter P."/>
            <person name="Koningstein G."/>
            <person name="Krogh S."/>
            <person name="Kumano M."/>
            <person name="Kurita K."/>
            <person name="Lapidus A."/>
            <person name="Lardinois S."/>
            <person name="Lauber J."/>
            <person name="Lazarevic V."/>
            <person name="Lee S.-M."/>
            <person name="Levine A."/>
            <person name="Liu H."/>
            <person name="Masuda S."/>
            <person name="Mauel C."/>
            <person name="Medigue C."/>
            <person name="Medina N."/>
            <person name="Mellado R.P."/>
            <person name="Mizuno M."/>
            <person name="Moestl D."/>
            <person name="Nakai S."/>
            <person name="Noback M."/>
            <person name="Noone D."/>
            <person name="O'Reilly M."/>
            <person name="Ogawa K."/>
            <person name="Ogiwara A."/>
            <person name="Oudega B."/>
            <person name="Park S.-H."/>
            <person name="Parro V."/>
            <person name="Pohl T.M."/>
            <person name="Portetelle D."/>
            <person name="Porwollik S."/>
            <person name="Prescott A.M."/>
            <person name="Presecan E."/>
            <person name="Pujic P."/>
            <person name="Purnelle B."/>
            <person name="Rapoport G."/>
            <person name="Rey M."/>
            <person name="Reynolds S."/>
            <person name="Rieger M."/>
            <person name="Rivolta C."/>
            <person name="Rocha E."/>
            <person name="Roche B."/>
            <person name="Rose M."/>
            <person name="Sadaie Y."/>
            <person name="Sato T."/>
            <person name="Scanlan E."/>
            <person name="Schleich S."/>
            <person name="Schroeter R."/>
            <person name="Scoffone F."/>
            <person name="Sekiguchi J."/>
            <person name="Sekowska A."/>
            <person name="Seror S.J."/>
            <person name="Serror P."/>
            <person name="Shin B.-S."/>
            <person name="Soldo B."/>
            <person name="Sorokin A."/>
            <person name="Tacconi E."/>
            <person name="Takagi T."/>
            <person name="Takahashi H."/>
            <person name="Takemaru K."/>
            <person name="Takeuchi M."/>
            <person name="Tamakoshi A."/>
            <person name="Tanaka T."/>
            <person name="Terpstra P."/>
            <person name="Tognoni A."/>
            <person name="Tosato V."/>
            <person name="Uchiyama S."/>
            <person name="Vandenbol M."/>
            <person name="Vannier F."/>
            <person name="Vassarotti A."/>
            <person name="Viari A."/>
            <person name="Wambutt R."/>
            <person name="Wedler E."/>
            <person name="Wedler H."/>
            <person name="Weitzenegger T."/>
            <person name="Winters P."/>
            <person name="Wipat A."/>
            <person name="Yamamoto H."/>
            <person name="Yamane K."/>
            <person name="Yasumoto K."/>
            <person name="Yata K."/>
            <person name="Yoshida K."/>
            <person name="Yoshikawa H.-F."/>
            <person name="Zumstein E."/>
            <person name="Yoshikawa H."/>
            <person name="Danchin A."/>
        </authorList>
    </citation>
    <scope>NUCLEOTIDE SEQUENCE [LARGE SCALE GENOMIC DNA]</scope>
    <source>
        <strain>168</strain>
    </source>
</reference>
<reference key="3">
    <citation type="journal article" date="2004" name="J. Biol. Chem.">
        <title>RNA polymerase mutation activates the production of a dormant antibiotic 3,3'-neotrehalosadiamine via an autoinduction mechanism in Bacillus subtilis.</title>
        <authorList>
            <person name="Inaoka T."/>
            <person name="Takahashi K."/>
            <person name="Yada H."/>
            <person name="Yoshida M."/>
            <person name="Ochi K."/>
        </authorList>
    </citation>
    <scope>FUNCTION</scope>
    <source>
        <strain>168 / 61884</strain>
    </source>
</reference>